<gene>
    <name type="primary">nhp2</name>
    <name type="synonym">nola2</name>
    <name type="ORF">zgc:73227</name>
</gene>
<reference key="1">
    <citation type="submission" date="2003-10" db="EMBL/GenBank/DDBJ databases">
        <authorList>
            <consortium name="NIH - Zebrafish Gene Collection (ZGC) project"/>
        </authorList>
    </citation>
    <scope>NUCLEOTIDE SEQUENCE [LARGE SCALE MRNA]</scope>
    <source>
        <tissue>Eye</tissue>
    </source>
</reference>
<evidence type="ECO:0000250" key="1"/>
<evidence type="ECO:0000250" key="2">
    <source>
        <dbReference type="UniProtKB" id="Q9NX24"/>
    </source>
</evidence>
<evidence type="ECO:0000305" key="3"/>
<dbReference type="EMBL" id="BC059569">
    <property type="protein sequence ID" value="AAH59569.1"/>
    <property type="molecule type" value="mRNA"/>
</dbReference>
<dbReference type="RefSeq" id="NP_997762.1">
    <property type="nucleotide sequence ID" value="NM_212597.2"/>
</dbReference>
<dbReference type="SMR" id="Q6PBV6"/>
<dbReference type="BioGRID" id="668315">
    <property type="interactions" value="1"/>
</dbReference>
<dbReference type="FunCoup" id="Q6PBV6">
    <property type="interactions" value="1583"/>
</dbReference>
<dbReference type="STRING" id="7955.ENSDARP00000091811"/>
<dbReference type="PaxDb" id="7955-ENSDARP00000091811"/>
<dbReference type="Ensembl" id="ENSDART00000101037">
    <property type="protein sequence ID" value="ENSDARP00000091811"/>
    <property type="gene ID" value="ENSDARG00000069422"/>
</dbReference>
<dbReference type="GeneID" id="100003787"/>
<dbReference type="KEGG" id="dre:100003787"/>
<dbReference type="AGR" id="ZFIN:ZDB-GENE-030131-533"/>
<dbReference type="CTD" id="55651"/>
<dbReference type="ZFIN" id="ZDB-GENE-030131-533">
    <property type="gene designation" value="nhp2"/>
</dbReference>
<dbReference type="eggNOG" id="KOG3167">
    <property type="taxonomic scope" value="Eukaryota"/>
</dbReference>
<dbReference type="HOGENOM" id="CLU_084513_1_0_1"/>
<dbReference type="InParanoid" id="Q6PBV6"/>
<dbReference type="OMA" id="EDNYEAR"/>
<dbReference type="OrthoDB" id="5364946at2759"/>
<dbReference type="PhylomeDB" id="Q6PBV6"/>
<dbReference type="TreeFam" id="TF105839"/>
<dbReference type="PRO" id="PR:Q6PBV6"/>
<dbReference type="Proteomes" id="UP000000437">
    <property type="component" value="Chromosome 21"/>
</dbReference>
<dbReference type="Bgee" id="ENSDARG00000069422">
    <property type="expression patterns" value="Expressed in gastrula and 36 other cell types or tissues"/>
</dbReference>
<dbReference type="GO" id="GO:0031429">
    <property type="term" value="C:box H/ACA snoRNP complex"/>
    <property type="evidence" value="ECO:0000318"/>
    <property type="project" value="GO_Central"/>
</dbReference>
<dbReference type="GO" id="GO:0005732">
    <property type="term" value="C:sno(s)RNA-containing ribonucleoprotein complex"/>
    <property type="evidence" value="ECO:0000250"/>
    <property type="project" value="UniProtKB"/>
</dbReference>
<dbReference type="GO" id="GO:0005697">
    <property type="term" value="C:telomerase holoenzyme complex"/>
    <property type="evidence" value="ECO:0000250"/>
    <property type="project" value="UniProtKB"/>
</dbReference>
<dbReference type="GO" id="GO:0034513">
    <property type="term" value="F:box H/ACA snoRNA binding"/>
    <property type="evidence" value="ECO:0000318"/>
    <property type="project" value="GO_Central"/>
</dbReference>
<dbReference type="GO" id="GO:0031118">
    <property type="term" value="P:rRNA pseudouridine synthesis"/>
    <property type="evidence" value="ECO:0000250"/>
    <property type="project" value="UniProtKB"/>
</dbReference>
<dbReference type="GO" id="GO:0031120">
    <property type="term" value="P:snRNA pseudouridine synthesis"/>
    <property type="evidence" value="ECO:0000318"/>
    <property type="project" value="GO_Central"/>
</dbReference>
<dbReference type="GO" id="GO:0007004">
    <property type="term" value="P:telomere maintenance via telomerase"/>
    <property type="evidence" value="ECO:0000250"/>
    <property type="project" value="UniProtKB"/>
</dbReference>
<dbReference type="FunFam" id="3.30.1330.30:FF:000016">
    <property type="entry name" value="H/ACA ribonucleoprotein complex subunit 2"/>
    <property type="match status" value="1"/>
</dbReference>
<dbReference type="Gene3D" id="3.30.1330.30">
    <property type="match status" value="1"/>
</dbReference>
<dbReference type="InterPro" id="IPR050257">
    <property type="entry name" value="eL8/uL1-like"/>
</dbReference>
<dbReference type="InterPro" id="IPR002415">
    <property type="entry name" value="H/ACA_rnp_Nhp2-like"/>
</dbReference>
<dbReference type="InterPro" id="IPR029064">
    <property type="entry name" value="Ribosomal_eL30-like_sf"/>
</dbReference>
<dbReference type="InterPro" id="IPR004038">
    <property type="entry name" value="Ribosomal_eL8/eL30/eS12/Gad45"/>
</dbReference>
<dbReference type="InterPro" id="IPR018492">
    <property type="entry name" value="Ribosomal_eL8/Nhp2"/>
</dbReference>
<dbReference type="PANTHER" id="PTHR23105">
    <property type="entry name" value="RIBOSOMAL PROTEIN L7AE FAMILY MEMBER"/>
    <property type="match status" value="1"/>
</dbReference>
<dbReference type="Pfam" id="PF01248">
    <property type="entry name" value="Ribosomal_L7Ae"/>
    <property type="match status" value="1"/>
</dbReference>
<dbReference type="PRINTS" id="PR00881">
    <property type="entry name" value="L7ARS6FAMILY"/>
</dbReference>
<dbReference type="PRINTS" id="PR00883">
    <property type="entry name" value="NUCLEARHMG"/>
</dbReference>
<dbReference type="SUPFAM" id="SSF55315">
    <property type="entry name" value="L30e-like"/>
    <property type="match status" value="1"/>
</dbReference>
<name>NHP2_DANRE</name>
<sequence length="150" mass="16688">MTKVKKEKAGEEETGGTEKSYQELIANINPIANPLASRKLSKKLYKCVKKAAKVKQIRRGVKEVQKFINKGETGIVVFAGDTLPIDVYCHLPIMCEDRSLPYAYVPSKVDLGSSAGSKRPTCVIMIKPHDEYKEAYDECVEEVTSLPKPI</sequence>
<comment type="function">
    <text evidence="1">Required for ribosome biogenesis. Part of a complex which catalyzes pseudouridylation of rRNA. This involves the isomerization of uridine such that the ribose is subsequently attached to C5, instead of the normal N1. Pseudouridine ('psi') residues may serve to stabilize the conformation of rRNAs (By similarity).</text>
</comment>
<comment type="subunit">
    <text evidence="2">Component of the small nucleolar ribonucleoprotein particle containing H/ACA-type snoRNAs (H/ACA snoRNPs) (By similarity). Component of the telomerase holoenzyme complex (By similarity).</text>
</comment>
<comment type="subcellular location">
    <subcellularLocation>
        <location evidence="1">Nucleus</location>
        <location evidence="1">Nucleolus</location>
    </subcellularLocation>
</comment>
<comment type="similarity">
    <text evidence="3">Belongs to the eukaryotic ribosomal protein eL8 family.</text>
</comment>
<protein>
    <recommendedName>
        <fullName>H/ACA ribonucleoprotein complex subunit 2-like protein</fullName>
    </recommendedName>
    <alternativeName>
        <fullName>Nucleolar protein family A member 2-like protein</fullName>
    </alternativeName>
    <alternativeName>
        <fullName>snoRNP protein NHP2</fullName>
    </alternativeName>
</protein>
<proteinExistence type="evidence at transcript level"/>
<keyword id="KW-0539">Nucleus</keyword>
<keyword id="KW-1185">Reference proteome</keyword>
<keyword id="KW-0687">Ribonucleoprotein</keyword>
<keyword id="KW-0690">Ribosome biogenesis</keyword>
<keyword id="KW-0694">RNA-binding</keyword>
<keyword id="KW-0698">rRNA processing</keyword>
<organism>
    <name type="scientific">Danio rerio</name>
    <name type="common">Zebrafish</name>
    <name type="synonym">Brachydanio rerio</name>
    <dbReference type="NCBI Taxonomy" id="7955"/>
    <lineage>
        <taxon>Eukaryota</taxon>
        <taxon>Metazoa</taxon>
        <taxon>Chordata</taxon>
        <taxon>Craniata</taxon>
        <taxon>Vertebrata</taxon>
        <taxon>Euteleostomi</taxon>
        <taxon>Actinopterygii</taxon>
        <taxon>Neopterygii</taxon>
        <taxon>Teleostei</taxon>
        <taxon>Ostariophysi</taxon>
        <taxon>Cypriniformes</taxon>
        <taxon>Danionidae</taxon>
        <taxon>Danioninae</taxon>
        <taxon>Danio</taxon>
    </lineage>
</organism>
<accession>Q6PBV6</accession>
<feature type="chain" id="PRO_0000136766" description="H/ACA ribonucleoprotein complex subunit 2-like protein">
    <location>
        <begin position="1"/>
        <end position="150"/>
    </location>
</feature>